<sequence length="487" mass="55618">MLTLQIFEAFAIILCVYFLWSRRRFYIMMLKLPGPMGFPFIGLAFEYIRLKRKIRLRTILFKIYGKTVLTWIGLTPVLVTCEPKILEDIFTSPNCSNRSSVVDKAISSCLGLGLLTLKNNHWNERRKLLLPSFKNNAVLSFVPVLNNEANFLVTLLAEFVDGGDINLLPELNKWSFKIAAQITMGDEVRNQANYQNGNLLESYKALNNLIPIGVVMPWLRNKYLGKLFSYEKRRLEAATQSNAFIKDIIDKKLSSTDNSSEPALIDRILNLVRIGELSYDDVMGEFSNIIFAASDTLSITVNNVLILMAMFPKYQDNVFEELAEVFPSGGEFEASHADLEKLVKLDRVLHETMRLIPAVPLLIRQTSHSIQLSNGFYIPEGVTLMIDIFHTHRNKDIWGPQANAFNPDNFLPENKRARPPYSYLPFSKGKKTCLGWKLSLISAKLALAKILRNYMLSTTFLYKDLRFIDNTTMKLAEQPLLAVKRRI</sequence>
<feature type="chain" id="PRO_0000052327" description="Probable cytochrome P450 313a5">
    <location>
        <begin position="1"/>
        <end position="487"/>
    </location>
</feature>
<feature type="binding site" description="axial binding residue" evidence="1">
    <location>
        <position position="433"/>
    </location>
    <ligand>
        <name>heme</name>
        <dbReference type="ChEBI" id="CHEBI:30413"/>
    </ligand>
    <ligandPart>
        <name>Fe</name>
        <dbReference type="ChEBI" id="CHEBI:18248"/>
    </ligandPart>
</feature>
<feature type="modified residue" description="Phosphotyrosine" evidence="2">
    <location>
        <position position="223"/>
    </location>
</feature>
<organism>
    <name type="scientific">Drosophila melanogaster</name>
    <name type="common">Fruit fly</name>
    <dbReference type="NCBI Taxonomy" id="7227"/>
    <lineage>
        <taxon>Eukaryota</taxon>
        <taxon>Metazoa</taxon>
        <taxon>Ecdysozoa</taxon>
        <taxon>Arthropoda</taxon>
        <taxon>Hexapoda</taxon>
        <taxon>Insecta</taxon>
        <taxon>Pterygota</taxon>
        <taxon>Neoptera</taxon>
        <taxon>Endopterygota</taxon>
        <taxon>Diptera</taxon>
        <taxon>Brachycera</taxon>
        <taxon>Muscomorpha</taxon>
        <taxon>Ephydroidea</taxon>
        <taxon>Drosophilidae</taxon>
        <taxon>Drosophila</taxon>
        <taxon>Sophophora</taxon>
    </lineage>
</organism>
<accession>Q9VGB5</accession>
<accession>Q4QQD1</accession>
<proteinExistence type="evidence at protein level"/>
<evidence type="ECO:0000250" key="1"/>
<evidence type="ECO:0000269" key="2">
    <source>
    </source>
</evidence>
<evidence type="ECO:0000305" key="3"/>
<reference key="1">
    <citation type="journal article" date="2000" name="Science">
        <title>The genome sequence of Drosophila melanogaster.</title>
        <authorList>
            <person name="Adams M.D."/>
            <person name="Celniker S.E."/>
            <person name="Holt R.A."/>
            <person name="Evans C.A."/>
            <person name="Gocayne J.D."/>
            <person name="Amanatides P.G."/>
            <person name="Scherer S.E."/>
            <person name="Li P.W."/>
            <person name="Hoskins R.A."/>
            <person name="Galle R.F."/>
            <person name="George R.A."/>
            <person name="Lewis S.E."/>
            <person name="Richards S."/>
            <person name="Ashburner M."/>
            <person name="Henderson S.N."/>
            <person name="Sutton G.G."/>
            <person name="Wortman J.R."/>
            <person name="Yandell M.D."/>
            <person name="Zhang Q."/>
            <person name="Chen L.X."/>
            <person name="Brandon R.C."/>
            <person name="Rogers Y.-H.C."/>
            <person name="Blazej R.G."/>
            <person name="Champe M."/>
            <person name="Pfeiffer B.D."/>
            <person name="Wan K.H."/>
            <person name="Doyle C."/>
            <person name="Baxter E.G."/>
            <person name="Helt G."/>
            <person name="Nelson C.R."/>
            <person name="Miklos G.L.G."/>
            <person name="Abril J.F."/>
            <person name="Agbayani A."/>
            <person name="An H.-J."/>
            <person name="Andrews-Pfannkoch C."/>
            <person name="Baldwin D."/>
            <person name="Ballew R.M."/>
            <person name="Basu A."/>
            <person name="Baxendale J."/>
            <person name="Bayraktaroglu L."/>
            <person name="Beasley E.M."/>
            <person name="Beeson K.Y."/>
            <person name="Benos P.V."/>
            <person name="Berman B.P."/>
            <person name="Bhandari D."/>
            <person name="Bolshakov S."/>
            <person name="Borkova D."/>
            <person name="Botchan M.R."/>
            <person name="Bouck J."/>
            <person name="Brokstein P."/>
            <person name="Brottier P."/>
            <person name="Burtis K.C."/>
            <person name="Busam D.A."/>
            <person name="Butler H."/>
            <person name="Cadieu E."/>
            <person name="Center A."/>
            <person name="Chandra I."/>
            <person name="Cherry J.M."/>
            <person name="Cawley S."/>
            <person name="Dahlke C."/>
            <person name="Davenport L.B."/>
            <person name="Davies P."/>
            <person name="de Pablos B."/>
            <person name="Delcher A."/>
            <person name="Deng Z."/>
            <person name="Mays A.D."/>
            <person name="Dew I."/>
            <person name="Dietz S.M."/>
            <person name="Dodson K."/>
            <person name="Doup L.E."/>
            <person name="Downes M."/>
            <person name="Dugan-Rocha S."/>
            <person name="Dunkov B.C."/>
            <person name="Dunn P."/>
            <person name="Durbin K.J."/>
            <person name="Evangelista C.C."/>
            <person name="Ferraz C."/>
            <person name="Ferriera S."/>
            <person name="Fleischmann W."/>
            <person name="Fosler C."/>
            <person name="Gabrielian A.E."/>
            <person name="Garg N.S."/>
            <person name="Gelbart W.M."/>
            <person name="Glasser K."/>
            <person name="Glodek A."/>
            <person name="Gong F."/>
            <person name="Gorrell J.H."/>
            <person name="Gu Z."/>
            <person name="Guan P."/>
            <person name="Harris M."/>
            <person name="Harris N.L."/>
            <person name="Harvey D.A."/>
            <person name="Heiman T.J."/>
            <person name="Hernandez J.R."/>
            <person name="Houck J."/>
            <person name="Hostin D."/>
            <person name="Houston K.A."/>
            <person name="Howland T.J."/>
            <person name="Wei M.-H."/>
            <person name="Ibegwam C."/>
            <person name="Jalali M."/>
            <person name="Kalush F."/>
            <person name="Karpen G.H."/>
            <person name="Ke Z."/>
            <person name="Kennison J.A."/>
            <person name="Ketchum K.A."/>
            <person name="Kimmel B.E."/>
            <person name="Kodira C.D."/>
            <person name="Kraft C.L."/>
            <person name="Kravitz S."/>
            <person name="Kulp D."/>
            <person name="Lai Z."/>
            <person name="Lasko P."/>
            <person name="Lei Y."/>
            <person name="Levitsky A.A."/>
            <person name="Li J.H."/>
            <person name="Li Z."/>
            <person name="Liang Y."/>
            <person name="Lin X."/>
            <person name="Liu X."/>
            <person name="Mattei B."/>
            <person name="McIntosh T.C."/>
            <person name="McLeod M.P."/>
            <person name="McPherson D."/>
            <person name="Merkulov G."/>
            <person name="Milshina N.V."/>
            <person name="Mobarry C."/>
            <person name="Morris J."/>
            <person name="Moshrefi A."/>
            <person name="Mount S.M."/>
            <person name="Moy M."/>
            <person name="Murphy B."/>
            <person name="Murphy L."/>
            <person name="Muzny D.M."/>
            <person name="Nelson D.L."/>
            <person name="Nelson D.R."/>
            <person name="Nelson K.A."/>
            <person name="Nixon K."/>
            <person name="Nusskern D.R."/>
            <person name="Pacleb J.M."/>
            <person name="Palazzolo M."/>
            <person name="Pittman G.S."/>
            <person name="Pan S."/>
            <person name="Pollard J."/>
            <person name="Puri V."/>
            <person name="Reese M.G."/>
            <person name="Reinert K."/>
            <person name="Remington K."/>
            <person name="Saunders R.D.C."/>
            <person name="Scheeler F."/>
            <person name="Shen H."/>
            <person name="Shue B.C."/>
            <person name="Siden-Kiamos I."/>
            <person name="Simpson M."/>
            <person name="Skupski M.P."/>
            <person name="Smith T.J."/>
            <person name="Spier E."/>
            <person name="Spradling A.C."/>
            <person name="Stapleton M."/>
            <person name="Strong R."/>
            <person name="Sun E."/>
            <person name="Svirskas R."/>
            <person name="Tector C."/>
            <person name="Turner R."/>
            <person name="Venter E."/>
            <person name="Wang A.H."/>
            <person name="Wang X."/>
            <person name="Wang Z.-Y."/>
            <person name="Wassarman D.A."/>
            <person name="Weinstock G.M."/>
            <person name="Weissenbach J."/>
            <person name="Williams S.M."/>
            <person name="Woodage T."/>
            <person name="Worley K.C."/>
            <person name="Wu D."/>
            <person name="Yang S."/>
            <person name="Yao Q.A."/>
            <person name="Ye J."/>
            <person name="Yeh R.-F."/>
            <person name="Zaveri J.S."/>
            <person name="Zhan M."/>
            <person name="Zhang G."/>
            <person name="Zhao Q."/>
            <person name="Zheng L."/>
            <person name="Zheng X.H."/>
            <person name="Zhong F.N."/>
            <person name="Zhong W."/>
            <person name="Zhou X."/>
            <person name="Zhu S.C."/>
            <person name="Zhu X."/>
            <person name="Smith H.O."/>
            <person name="Gibbs R.A."/>
            <person name="Myers E.W."/>
            <person name="Rubin G.M."/>
            <person name="Venter J.C."/>
        </authorList>
    </citation>
    <scope>NUCLEOTIDE SEQUENCE [LARGE SCALE GENOMIC DNA]</scope>
    <source>
        <strain>Berkeley</strain>
    </source>
</reference>
<reference key="2">
    <citation type="journal article" date="2002" name="Genome Biol.">
        <title>Annotation of the Drosophila melanogaster euchromatic genome: a systematic review.</title>
        <authorList>
            <person name="Misra S."/>
            <person name="Crosby M.A."/>
            <person name="Mungall C.J."/>
            <person name="Matthews B.B."/>
            <person name="Campbell K.S."/>
            <person name="Hradecky P."/>
            <person name="Huang Y."/>
            <person name="Kaminker J.S."/>
            <person name="Millburn G.H."/>
            <person name="Prochnik S.E."/>
            <person name="Smith C.D."/>
            <person name="Tupy J.L."/>
            <person name="Whitfield E.J."/>
            <person name="Bayraktaroglu L."/>
            <person name="Berman B.P."/>
            <person name="Bettencourt B.R."/>
            <person name="Celniker S.E."/>
            <person name="de Grey A.D.N.J."/>
            <person name="Drysdale R.A."/>
            <person name="Harris N.L."/>
            <person name="Richter J."/>
            <person name="Russo S."/>
            <person name="Schroeder A.J."/>
            <person name="Shu S.Q."/>
            <person name="Stapleton M."/>
            <person name="Yamada C."/>
            <person name="Ashburner M."/>
            <person name="Gelbart W.M."/>
            <person name="Rubin G.M."/>
            <person name="Lewis S.E."/>
        </authorList>
    </citation>
    <scope>GENOME REANNOTATION</scope>
    <source>
        <strain>Berkeley</strain>
    </source>
</reference>
<reference key="3">
    <citation type="submission" date="2006-06" db="EMBL/GenBank/DDBJ databases">
        <authorList>
            <person name="Stapleton M."/>
            <person name="Carlson J.W."/>
            <person name="Chavez C."/>
            <person name="Frise E."/>
            <person name="George R.A."/>
            <person name="Pacleb J.M."/>
            <person name="Park S."/>
            <person name="Wan K.H."/>
            <person name="Yu C."/>
            <person name="Celniker S.E."/>
        </authorList>
    </citation>
    <scope>NUCLEOTIDE SEQUENCE [LARGE SCALE MRNA]</scope>
    <source>
        <strain>Berkeley</strain>
        <tissue>Embryo</tissue>
    </source>
</reference>
<reference key="4">
    <citation type="journal article" date="2008" name="J. Proteome Res.">
        <title>Phosphoproteome analysis of Drosophila melanogaster embryos.</title>
        <authorList>
            <person name="Zhai B."/>
            <person name="Villen J."/>
            <person name="Beausoleil S.A."/>
            <person name="Mintseris J."/>
            <person name="Gygi S.P."/>
        </authorList>
    </citation>
    <scope>PHOSPHORYLATION [LARGE SCALE ANALYSIS] AT TYR-223</scope>
    <scope>IDENTIFICATION BY MASS SPECTROMETRY</scope>
    <source>
        <tissue>Embryo</tissue>
    </source>
</reference>
<dbReference type="EC" id="1.14.-.-"/>
<dbReference type="EMBL" id="AE014297">
    <property type="protein sequence ID" value="AAF54768.2"/>
    <property type="molecule type" value="Genomic_DNA"/>
</dbReference>
<dbReference type="EMBL" id="BT023485">
    <property type="protein sequence ID" value="AAY84885.2"/>
    <property type="molecule type" value="mRNA"/>
</dbReference>
<dbReference type="RefSeq" id="NP_650168.1">
    <property type="nucleotide sequence ID" value="NM_141911.3"/>
</dbReference>
<dbReference type="SMR" id="Q9VGB5"/>
<dbReference type="FunCoup" id="Q9VGB5">
    <property type="interactions" value="2"/>
</dbReference>
<dbReference type="STRING" id="7227.FBpp0082088"/>
<dbReference type="iPTMnet" id="Q9VGB5"/>
<dbReference type="PaxDb" id="7227-FBpp0082088"/>
<dbReference type="DNASU" id="41486"/>
<dbReference type="EnsemblMetazoa" id="FBtr0082619">
    <property type="protein sequence ID" value="FBpp0082088"/>
    <property type="gene ID" value="FBgn0038005"/>
</dbReference>
<dbReference type="GeneID" id="41486"/>
<dbReference type="KEGG" id="dme:Dmel_CG15807"/>
<dbReference type="UCSC" id="CG15807-RA">
    <property type="organism name" value="d. melanogaster"/>
</dbReference>
<dbReference type="AGR" id="FB:FBgn0038005"/>
<dbReference type="CTD" id="41486"/>
<dbReference type="FlyBase" id="FBgn0038005">
    <property type="gene designation" value="Cyp313a5"/>
</dbReference>
<dbReference type="VEuPathDB" id="VectorBase:FBgn0038005"/>
<dbReference type="eggNOG" id="KOG0157">
    <property type="taxonomic scope" value="Eukaryota"/>
</dbReference>
<dbReference type="GeneTree" id="ENSGT00940000167150"/>
<dbReference type="HOGENOM" id="CLU_001570_5_1_1"/>
<dbReference type="InParanoid" id="Q9VGB5"/>
<dbReference type="OMA" id="PQANAFN"/>
<dbReference type="OrthoDB" id="1470350at2759"/>
<dbReference type="PhylomeDB" id="Q9VGB5"/>
<dbReference type="BioGRID-ORCS" id="41486">
    <property type="hits" value="0 hits in 1 CRISPR screen"/>
</dbReference>
<dbReference type="GenomeRNAi" id="41486"/>
<dbReference type="PRO" id="PR:Q9VGB5"/>
<dbReference type="Proteomes" id="UP000000803">
    <property type="component" value="Chromosome 3R"/>
</dbReference>
<dbReference type="Bgee" id="FBgn0038005">
    <property type="expression patterns" value="Expressed in larva and 3 other cell types or tissues"/>
</dbReference>
<dbReference type="GO" id="GO:0005789">
    <property type="term" value="C:endoplasmic reticulum membrane"/>
    <property type="evidence" value="ECO:0007669"/>
    <property type="project" value="UniProtKB-SubCell"/>
</dbReference>
<dbReference type="GO" id="GO:0020037">
    <property type="term" value="F:heme binding"/>
    <property type="evidence" value="ECO:0007669"/>
    <property type="project" value="InterPro"/>
</dbReference>
<dbReference type="GO" id="GO:0005506">
    <property type="term" value="F:iron ion binding"/>
    <property type="evidence" value="ECO:0007669"/>
    <property type="project" value="InterPro"/>
</dbReference>
<dbReference type="GO" id="GO:0004497">
    <property type="term" value="F:monooxygenase activity"/>
    <property type="evidence" value="ECO:0007669"/>
    <property type="project" value="UniProtKB-KW"/>
</dbReference>
<dbReference type="GO" id="GO:0016705">
    <property type="term" value="F:oxidoreductase activity, acting on paired donors, with incorporation or reduction of molecular oxygen"/>
    <property type="evidence" value="ECO:0007669"/>
    <property type="project" value="InterPro"/>
</dbReference>
<dbReference type="CDD" id="cd11057">
    <property type="entry name" value="CYP313-like"/>
    <property type="match status" value="1"/>
</dbReference>
<dbReference type="Gene3D" id="1.10.630.10">
    <property type="entry name" value="Cytochrome P450"/>
    <property type="match status" value="1"/>
</dbReference>
<dbReference type="InterPro" id="IPR001128">
    <property type="entry name" value="Cyt_P450"/>
</dbReference>
<dbReference type="InterPro" id="IPR017972">
    <property type="entry name" value="Cyt_P450_CS"/>
</dbReference>
<dbReference type="InterPro" id="IPR002401">
    <property type="entry name" value="Cyt_P450_E_grp-I"/>
</dbReference>
<dbReference type="InterPro" id="IPR036396">
    <property type="entry name" value="Cyt_P450_sf"/>
</dbReference>
<dbReference type="InterPro" id="IPR050196">
    <property type="entry name" value="Cytochrome_P450_Monoox"/>
</dbReference>
<dbReference type="PANTHER" id="PTHR24291:SF189">
    <property type="entry name" value="CYTOCHROME P450 4C3-RELATED"/>
    <property type="match status" value="1"/>
</dbReference>
<dbReference type="PANTHER" id="PTHR24291">
    <property type="entry name" value="CYTOCHROME P450 FAMILY 4"/>
    <property type="match status" value="1"/>
</dbReference>
<dbReference type="Pfam" id="PF00067">
    <property type="entry name" value="p450"/>
    <property type="match status" value="1"/>
</dbReference>
<dbReference type="PRINTS" id="PR00463">
    <property type="entry name" value="EP450I"/>
</dbReference>
<dbReference type="PRINTS" id="PR00385">
    <property type="entry name" value="P450"/>
</dbReference>
<dbReference type="SUPFAM" id="SSF48264">
    <property type="entry name" value="Cytochrome P450"/>
    <property type="match status" value="1"/>
</dbReference>
<dbReference type="PROSITE" id="PS00086">
    <property type="entry name" value="CYTOCHROME_P450"/>
    <property type="match status" value="1"/>
</dbReference>
<name>CP135_DROME</name>
<gene>
    <name type="primary">Cyp313a5</name>
    <name type="ORF">CG15807</name>
</gene>
<keyword id="KW-0256">Endoplasmic reticulum</keyword>
<keyword id="KW-0349">Heme</keyword>
<keyword id="KW-0408">Iron</keyword>
<keyword id="KW-0472">Membrane</keyword>
<keyword id="KW-0479">Metal-binding</keyword>
<keyword id="KW-0492">Microsome</keyword>
<keyword id="KW-0503">Monooxygenase</keyword>
<keyword id="KW-0560">Oxidoreductase</keyword>
<keyword id="KW-0597">Phosphoprotein</keyword>
<keyword id="KW-1185">Reference proteome</keyword>
<protein>
    <recommendedName>
        <fullName>Probable cytochrome P450 313a5</fullName>
        <ecNumber>1.14.-.-</ecNumber>
    </recommendedName>
    <alternativeName>
        <fullName>CYPCCCXIIIA5</fullName>
    </alternativeName>
</protein>
<comment type="function">
    <text evidence="1">May be involved in the metabolism of insect hormones and in the breakdown of synthetic insecticides.</text>
</comment>
<comment type="cofactor">
    <cofactor evidence="1">
        <name>heme</name>
        <dbReference type="ChEBI" id="CHEBI:30413"/>
    </cofactor>
</comment>
<comment type="subcellular location">
    <subcellularLocation>
        <location evidence="3">Endoplasmic reticulum membrane</location>
        <topology evidence="3">Peripheral membrane protein</topology>
    </subcellularLocation>
    <subcellularLocation>
        <location evidence="3">Microsome membrane</location>
        <topology evidence="3">Peripheral membrane protein</topology>
    </subcellularLocation>
</comment>
<comment type="similarity">
    <text evidence="3">Belongs to the cytochrome P450 family.</text>
</comment>